<comment type="function">
    <text evidence="1">Catalyzes the phosphorylation of the position 2 hydroxy group of 4-diphosphocytidyl-2C-methyl-D-erythritol.</text>
</comment>
<comment type="catalytic activity">
    <reaction evidence="1">
        <text>4-CDP-2-C-methyl-D-erythritol + ATP = 4-CDP-2-C-methyl-D-erythritol 2-phosphate + ADP + H(+)</text>
        <dbReference type="Rhea" id="RHEA:18437"/>
        <dbReference type="ChEBI" id="CHEBI:15378"/>
        <dbReference type="ChEBI" id="CHEBI:30616"/>
        <dbReference type="ChEBI" id="CHEBI:57823"/>
        <dbReference type="ChEBI" id="CHEBI:57919"/>
        <dbReference type="ChEBI" id="CHEBI:456216"/>
        <dbReference type="EC" id="2.7.1.148"/>
    </reaction>
</comment>
<comment type="pathway">
    <text evidence="1">Isoprenoid biosynthesis; isopentenyl diphosphate biosynthesis via DXP pathway; isopentenyl diphosphate from 1-deoxy-D-xylulose 5-phosphate: step 3/6.</text>
</comment>
<comment type="similarity">
    <text evidence="1">Belongs to the GHMP kinase family. IspE subfamily.</text>
</comment>
<accession>B0BP57</accession>
<protein>
    <recommendedName>
        <fullName evidence="1">4-diphosphocytidyl-2-C-methyl-D-erythritol kinase</fullName>
        <shortName evidence="1">CMK</shortName>
        <ecNumber evidence="1">2.7.1.148</ecNumber>
    </recommendedName>
    <alternativeName>
        <fullName evidence="1">4-(cytidine-5'-diphospho)-2-C-methyl-D-erythritol kinase</fullName>
    </alternativeName>
</protein>
<name>ISPE_ACTPJ</name>
<organism>
    <name type="scientific">Actinobacillus pleuropneumoniae serotype 3 (strain JL03)</name>
    <dbReference type="NCBI Taxonomy" id="434271"/>
    <lineage>
        <taxon>Bacteria</taxon>
        <taxon>Pseudomonadati</taxon>
        <taxon>Pseudomonadota</taxon>
        <taxon>Gammaproteobacteria</taxon>
        <taxon>Pasteurellales</taxon>
        <taxon>Pasteurellaceae</taxon>
        <taxon>Actinobacillus</taxon>
    </lineage>
</organism>
<dbReference type="EC" id="2.7.1.148" evidence="1"/>
<dbReference type="EMBL" id="CP000687">
    <property type="protein sequence ID" value="ABY69342.1"/>
    <property type="molecule type" value="Genomic_DNA"/>
</dbReference>
<dbReference type="RefSeq" id="WP_005612040.1">
    <property type="nucleotide sequence ID" value="NC_010278.1"/>
</dbReference>
<dbReference type="SMR" id="B0BP57"/>
<dbReference type="KEGG" id="apj:APJL_0779"/>
<dbReference type="HOGENOM" id="CLU_053057_3_0_6"/>
<dbReference type="UniPathway" id="UPA00056">
    <property type="reaction ID" value="UER00094"/>
</dbReference>
<dbReference type="Proteomes" id="UP000008547">
    <property type="component" value="Chromosome"/>
</dbReference>
<dbReference type="GO" id="GO:0050515">
    <property type="term" value="F:4-(cytidine 5'-diphospho)-2-C-methyl-D-erythritol kinase activity"/>
    <property type="evidence" value="ECO:0007669"/>
    <property type="project" value="UniProtKB-UniRule"/>
</dbReference>
<dbReference type="GO" id="GO:0005524">
    <property type="term" value="F:ATP binding"/>
    <property type="evidence" value="ECO:0007669"/>
    <property type="project" value="UniProtKB-UniRule"/>
</dbReference>
<dbReference type="GO" id="GO:0019288">
    <property type="term" value="P:isopentenyl diphosphate biosynthetic process, methylerythritol 4-phosphate pathway"/>
    <property type="evidence" value="ECO:0007669"/>
    <property type="project" value="UniProtKB-UniRule"/>
</dbReference>
<dbReference type="GO" id="GO:0016114">
    <property type="term" value="P:terpenoid biosynthetic process"/>
    <property type="evidence" value="ECO:0007669"/>
    <property type="project" value="InterPro"/>
</dbReference>
<dbReference type="FunFam" id="3.30.230.10:FF:000022">
    <property type="entry name" value="4-diphosphocytidyl-2-C-methyl-D-erythritol kinase"/>
    <property type="match status" value="1"/>
</dbReference>
<dbReference type="Gene3D" id="3.30.230.10">
    <property type="match status" value="1"/>
</dbReference>
<dbReference type="Gene3D" id="3.30.70.890">
    <property type="entry name" value="GHMP kinase, C-terminal domain"/>
    <property type="match status" value="1"/>
</dbReference>
<dbReference type="HAMAP" id="MF_00061">
    <property type="entry name" value="IspE"/>
    <property type="match status" value="1"/>
</dbReference>
<dbReference type="InterPro" id="IPR013750">
    <property type="entry name" value="GHMP_kinase_C_dom"/>
</dbReference>
<dbReference type="InterPro" id="IPR036554">
    <property type="entry name" value="GHMP_kinase_C_sf"/>
</dbReference>
<dbReference type="InterPro" id="IPR006204">
    <property type="entry name" value="GHMP_kinase_N_dom"/>
</dbReference>
<dbReference type="InterPro" id="IPR004424">
    <property type="entry name" value="IspE"/>
</dbReference>
<dbReference type="InterPro" id="IPR020568">
    <property type="entry name" value="Ribosomal_Su5_D2-typ_SF"/>
</dbReference>
<dbReference type="InterPro" id="IPR014721">
    <property type="entry name" value="Ribsml_uS5_D2-typ_fold_subgr"/>
</dbReference>
<dbReference type="NCBIfam" id="TIGR00154">
    <property type="entry name" value="ispE"/>
    <property type="match status" value="1"/>
</dbReference>
<dbReference type="PANTHER" id="PTHR43527">
    <property type="entry name" value="4-DIPHOSPHOCYTIDYL-2-C-METHYL-D-ERYTHRITOL KINASE, CHLOROPLASTIC"/>
    <property type="match status" value="1"/>
</dbReference>
<dbReference type="PANTHER" id="PTHR43527:SF2">
    <property type="entry name" value="4-DIPHOSPHOCYTIDYL-2-C-METHYL-D-ERYTHRITOL KINASE, CHLOROPLASTIC"/>
    <property type="match status" value="1"/>
</dbReference>
<dbReference type="Pfam" id="PF08544">
    <property type="entry name" value="GHMP_kinases_C"/>
    <property type="match status" value="1"/>
</dbReference>
<dbReference type="Pfam" id="PF00288">
    <property type="entry name" value="GHMP_kinases_N"/>
    <property type="match status" value="1"/>
</dbReference>
<dbReference type="PIRSF" id="PIRSF010376">
    <property type="entry name" value="IspE"/>
    <property type="match status" value="1"/>
</dbReference>
<dbReference type="SUPFAM" id="SSF55060">
    <property type="entry name" value="GHMP Kinase, C-terminal domain"/>
    <property type="match status" value="1"/>
</dbReference>
<dbReference type="SUPFAM" id="SSF54211">
    <property type="entry name" value="Ribosomal protein S5 domain 2-like"/>
    <property type="match status" value="1"/>
</dbReference>
<feature type="chain" id="PRO_0000335693" description="4-diphosphocytidyl-2-C-methyl-D-erythritol kinase">
    <location>
        <begin position="1"/>
        <end position="285"/>
    </location>
</feature>
<feature type="active site" evidence="1">
    <location>
        <position position="12"/>
    </location>
</feature>
<feature type="active site" evidence="1">
    <location>
        <position position="137"/>
    </location>
</feature>
<feature type="binding site" evidence="1">
    <location>
        <begin position="95"/>
        <end position="105"/>
    </location>
    <ligand>
        <name>ATP</name>
        <dbReference type="ChEBI" id="CHEBI:30616"/>
    </ligand>
</feature>
<sequence length="285" mass="31368">MTKKIILPSPAKLNLFLYITNKRADGYHELQTLFQFLDFGDDISLEVNESGEIELLNAIEGVAKEQNLIYRAAKLLQNHTACSKGAKIGVTKRLPMGGGVGGGSSNAATVLVGLNHFWQTGLSLEQLAELGLSLGADVPIFVRGFAAFAEGVGEKLVACQPRESWYVVLKPNVSISTAAVFQDPNLPRNTPKRTLSRLLSEEWTNDCEKVVRDHYFEVEDLIAELLQYATFRLTGTGACIFAEFESEAEAKAVFAHKPHNIFGFIAKGQNRSPLHQMLNLTTFPQ</sequence>
<proteinExistence type="inferred from homology"/>
<evidence type="ECO:0000255" key="1">
    <source>
        <dbReference type="HAMAP-Rule" id="MF_00061"/>
    </source>
</evidence>
<keyword id="KW-0067">ATP-binding</keyword>
<keyword id="KW-0414">Isoprene biosynthesis</keyword>
<keyword id="KW-0418">Kinase</keyword>
<keyword id="KW-0547">Nucleotide-binding</keyword>
<keyword id="KW-0808">Transferase</keyword>
<gene>
    <name evidence="1" type="primary">ispE</name>
    <name type="ordered locus">APJL_0779</name>
</gene>
<reference key="1">
    <citation type="journal article" date="2008" name="PLoS ONE">
        <title>Genome biology of Actinobacillus pleuropneumoniae JL03, an isolate of serotype 3 prevalent in China.</title>
        <authorList>
            <person name="Xu Z."/>
            <person name="Zhou Y."/>
            <person name="Li L."/>
            <person name="Zhou R."/>
            <person name="Xiao S."/>
            <person name="Wan Y."/>
            <person name="Zhang S."/>
            <person name="Wang K."/>
            <person name="Li W."/>
            <person name="Li L."/>
            <person name="Jin H."/>
            <person name="Kang M."/>
            <person name="Dalai B."/>
            <person name="Li T."/>
            <person name="Liu L."/>
            <person name="Cheng Y."/>
            <person name="Zhang L."/>
            <person name="Xu T."/>
            <person name="Zheng H."/>
            <person name="Pu S."/>
            <person name="Wang B."/>
            <person name="Gu W."/>
            <person name="Zhang X.L."/>
            <person name="Zhu G.-F."/>
            <person name="Wang S."/>
            <person name="Zhao G.-P."/>
            <person name="Chen H."/>
        </authorList>
    </citation>
    <scope>NUCLEOTIDE SEQUENCE [LARGE SCALE GENOMIC DNA]</scope>
    <source>
        <strain>JL03</strain>
    </source>
</reference>